<gene>
    <name evidence="1" type="primary">tsaD</name>
    <name type="synonym">gcp</name>
    <name type="ordered locus">EFER_3005</name>
</gene>
<protein>
    <recommendedName>
        <fullName evidence="1">tRNA N6-adenosine threonylcarbamoyltransferase</fullName>
        <ecNumber evidence="1">2.3.1.234</ecNumber>
    </recommendedName>
    <alternativeName>
        <fullName evidence="1">N6-L-threonylcarbamoyladenine synthase</fullName>
        <shortName evidence="1">t(6)A synthase</shortName>
    </alternativeName>
    <alternativeName>
        <fullName evidence="1">t(6)A37 threonylcarbamoyladenosine biosynthesis protein TsaD</fullName>
    </alternativeName>
    <alternativeName>
        <fullName evidence="1">tRNA threonylcarbamoyladenosine biosynthesis protein TsaD</fullName>
    </alternativeName>
</protein>
<reference key="1">
    <citation type="journal article" date="2009" name="PLoS Genet.">
        <title>Organised genome dynamics in the Escherichia coli species results in highly diverse adaptive paths.</title>
        <authorList>
            <person name="Touchon M."/>
            <person name="Hoede C."/>
            <person name="Tenaillon O."/>
            <person name="Barbe V."/>
            <person name="Baeriswyl S."/>
            <person name="Bidet P."/>
            <person name="Bingen E."/>
            <person name="Bonacorsi S."/>
            <person name="Bouchier C."/>
            <person name="Bouvet O."/>
            <person name="Calteau A."/>
            <person name="Chiapello H."/>
            <person name="Clermont O."/>
            <person name="Cruveiller S."/>
            <person name="Danchin A."/>
            <person name="Diard M."/>
            <person name="Dossat C."/>
            <person name="Karoui M.E."/>
            <person name="Frapy E."/>
            <person name="Garry L."/>
            <person name="Ghigo J.M."/>
            <person name="Gilles A.M."/>
            <person name="Johnson J."/>
            <person name="Le Bouguenec C."/>
            <person name="Lescat M."/>
            <person name="Mangenot S."/>
            <person name="Martinez-Jehanne V."/>
            <person name="Matic I."/>
            <person name="Nassif X."/>
            <person name="Oztas S."/>
            <person name="Petit M.A."/>
            <person name="Pichon C."/>
            <person name="Rouy Z."/>
            <person name="Ruf C.S."/>
            <person name="Schneider D."/>
            <person name="Tourret J."/>
            <person name="Vacherie B."/>
            <person name="Vallenet D."/>
            <person name="Medigue C."/>
            <person name="Rocha E.P.C."/>
            <person name="Denamur E."/>
        </authorList>
    </citation>
    <scope>NUCLEOTIDE SEQUENCE [LARGE SCALE GENOMIC DNA]</scope>
    <source>
        <strain>ATCC 35469 / DSM 13698 / BCRC 15582 / CCUG 18766 / IAM 14443 / JCM 21226 / LMG 7866 / NBRC 102419 / NCTC 12128 / CDC 0568-73</strain>
    </source>
</reference>
<organism>
    <name type="scientific">Escherichia fergusonii (strain ATCC 35469 / DSM 13698 / CCUG 18766 / IAM 14443 / JCM 21226 / LMG 7866 / NBRC 102419 / NCTC 12128 / CDC 0568-73)</name>
    <dbReference type="NCBI Taxonomy" id="585054"/>
    <lineage>
        <taxon>Bacteria</taxon>
        <taxon>Pseudomonadati</taxon>
        <taxon>Pseudomonadota</taxon>
        <taxon>Gammaproteobacteria</taxon>
        <taxon>Enterobacterales</taxon>
        <taxon>Enterobacteriaceae</taxon>
        <taxon>Escherichia</taxon>
    </lineage>
</organism>
<dbReference type="EC" id="2.3.1.234" evidence="1"/>
<dbReference type="EMBL" id="CU928158">
    <property type="protein sequence ID" value="CAQ90498.1"/>
    <property type="molecule type" value="Genomic_DNA"/>
</dbReference>
<dbReference type="RefSeq" id="WP_001264365.1">
    <property type="nucleotide sequence ID" value="NC_011740.1"/>
</dbReference>
<dbReference type="SMR" id="B7LQD8"/>
<dbReference type="GeneID" id="93778929"/>
<dbReference type="KEGG" id="efe:EFER_3005"/>
<dbReference type="HOGENOM" id="CLU_023208_0_2_6"/>
<dbReference type="OrthoDB" id="9806197at2"/>
<dbReference type="Proteomes" id="UP000000745">
    <property type="component" value="Chromosome"/>
</dbReference>
<dbReference type="GO" id="GO:0005737">
    <property type="term" value="C:cytoplasm"/>
    <property type="evidence" value="ECO:0007669"/>
    <property type="project" value="UniProtKB-SubCell"/>
</dbReference>
<dbReference type="GO" id="GO:0005506">
    <property type="term" value="F:iron ion binding"/>
    <property type="evidence" value="ECO:0007669"/>
    <property type="project" value="UniProtKB-UniRule"/>
</dbReference>
<dbReference type="GO" id="GO:0061711">
    <property type="term" value="F:N(6)-L-threonylcarbamoyladenine synthase activity"/>
    <property type="evidence" value="ECO:0007669"/>
    <property type="project" value="UniProtKB-EC"/>
</dbReference>
<dbReference type="GO" id="GO:0002949">
    <property type="term" value="P:tRNA threonylcarbamoyladenosine modification"/>
    <property type="evidence" value="ECO:0007669"/>
    <property type="project" value="UniProtKB-UniRule"/>
</dbReference>
<dbReference type="CDD" id="cd24097">
    <property type="entry name" value="ASKHA_NBD_TsaD-like"/>
    <property type="match status" value="1"/>
</dbReference>
<dbReference type="FunFam" id="3.30.420.40:FF:000031">
    <property type="entry name" value="tRNA N6-adenosine threonylcarbamoyltransferase"/>
    <property type="match status" value="1"/>
</dbReference>
<dbReference type="Gene3D" id="3.30.420.40">
    <property type="match status" value="2"/>
</dbReference>
<dbReference type="HAMAP" id="MF_01445">
    <property type="entry name" value="TsaD"/>
    <property type="match status" value="1"/>
</dbReference>
<dbReference type="InterPro" id="IPR043129">
    <property type="entry name" value="ATPase_NBD"/>
</dbReference>
<dbReference type="InterPro" id="IPR000905">
    <property type="entry name" value="Gcp-like_dom"/>
</dbReference>
<dbReference type="InterPro" id="IPR017861">
    <property type="entry name" value="KAE1/TsaD"/>
</dbReference>
<dbReference type="InterPro" id="IPR017860">
    <property type="entry name" value="Peptidase_M22_CS"/>
</dbReference>
<dbReference type="InterPro" id="IPR022450">
    <property type="entry name" value="TsaD"/>
</dbReference>
<dbReference type="NCBIfam" id="TIGR00329">
    <property type="entry name" value="gcp_kae1"/>
    <property type="match status" value="1"/>
</dbReference>
<dbReference type="NCBIfam" id="TIGR03723">
    <property type="entry name" value="T6A_TsaD_YgjD"/>
    <property type="match status" value="1"/>
</dbReference>
<dbReference type="PANTHER" id="PTHR11735">
    <property type="entry name" value="TRNA N6-ADENOSINE THREONYLCARBAMOYLTRANSFERASE"/>
    <property type="match status" value="1"/>
</dbReference>
<dbReference type="PANTHER" id="PTHR11735:SF6">
    <property type="entry name" value="TRNA N6-ADENOSINE THREONYLCARBAMOYLTRANSFERASE, MITOCHONDRIAL"/>
    <property type="match status" value="1"/>
</dbReference>
<dbReference type="Pfam" id="PF00814">
    <property type="entry name" value="TsaD"/>
    <property type="match status" value="1"/>
</dbReference>
<dbReference type="PRINTS" id="PR00789">
    <property type="entry name" value="OSIALOPTASE"/>
</dbReference>
<dbReference type="SUPFAM" id="SSF53067">
    <property type="entry name" value="Actin-like ATPase domain"/>
    <property type="match status" value="1"/>
</dbReference>
<dbReference type="PROSITE" id="PS01016">
    <property type="entry name" value="GLYCOPROTEASE"/>
    <property type="match status" value="1"/>
</dbReference>
<accession>B7LQD8</accession>
<keyword id="KW-0012">Acyltransferase</keyword>
<keyword id="KW-0963">Cytoplasm</keyword>
<keyword id="KW-0408">Iron</keyword>
<keyword id="KW-0479">Metal-binding</keyword>
<keyword id="KW-0808">Transferase</keyword>
<keyword id="KW-0819">tRNA processing</keyword>
<comment type="function">
    <text evidence="1">Required for the formation of a threonylcarbamoyl group on adenosine at position 37 (t(6)A37) in tRNAs that read codons beginning with adenine. Is involved in the transfer of the threonylcarbamoyl moiety of threonylcarbamoyl-AMP (TC-AMP) to the N6 group of A37, together with TsaE and TsaB. TsaD likely plays a direct catalytic role in this reaction.</text>
</comment>
<comment type="catalytic activity">
    <reaction evidence="1">
        <text>L-threonylcarbamoyladenylate + adenosine(37) in tRNA = N(6)-L-threonylcarbamoyladenosine(37) in tRNA + AMP + H(+)</text>
        <dbReference type="Rhea" id="RHEA:37059"/>
        <dbReference type="Rhea" id="RHEA-COMP:10162"/>
        <dbReference type="Rhea" id="RHEA-COMP:10163"/>
        <dbReference type="ChEBI" id="CHEBI:15378"/>
        <dbReference type="ChEBI" id="CHEBI:73682"/>
        <dbReference type="ChEBI" id="CHEBI:74411"/>
        <dbReference type="ChEBI" id="CHEBI:74418"/>
        <dbReference type="ChEBI" id="CHEBI:456215"/>
        <dbReference type="EC" id="2.3.1.234"/>
    </reaction>
</comment>
<comment type="cofactor">
    <cofactor evidence="1">
        <name>Fe(2+)</name>
        <dbReference type="ChEBI" id="CHEBI:29033"/>
    </cofactor>
    <text evidence="1">Binds 1 Fe(2+) ion per subunit.</text>
</comment>
<comment type="subcellular location">
    <subcellularLocation>
        <location evidence="1">Cytoplasm</location>
    </subcellularLocation>
</comment>
<comment type="similarity">
    <text evidence="1">Belongs to the KAE1 / TsaD family.</text>
</comment>
<sequence>MRVLGIETSCDETGIAIYDDEKGLLANQLYSQVKLHADYGGVVPELASRDHVRKTVPLIQAALKESGLTAKDIDAVAYTAGPGLVGALLVGATVGRSLAFAWNVPAIPVHHMEGHLLAPMLEDNPPEFPFVALLVSGGHTQLISVTGIGQYELLGESIDDAAGEAFDKTAKLLGLDYPGGPLLSKMAAQGTAGRFVFPRPMTDRPGLDFSFSGLKTFAANTIRDNGTDDQTRADIARAFEDAVVDTLMIKCKRALDQTGFKRLVMAGGVSANRTLRAKLAEMMKKRRGEVFYARPEFCTDNGAMIAYAGMVRFKAGATADLGVSVRPRWPLAELPAA</sequence>
<name>TSAD_ESCF3</name>
<feature type="chain" id="PRO_1000145983" description="tRNA N6-adenosine threonylcarbamoyltransferase">
    <location>
        <begin position="1"/>
        <end position="337"/>
    </location>
</feature>
<feature type="binding site" evidence="1">
    <location>
        <position position="111"/>
    </location>
    <ligand>
        <name>Fe cation</name>
        <dbReference type="ChEBI" id="CHEBI:24875"/>
    </ligand>
</feature>
<feature type="binding site" evidence="1">
    <location>
        <position position="115"/>
    </location>
    <ligand>
        <name>Fe cation</name>
        <dbReference type="ChEBI" id="CHEBI:24875"/>
    </ligand>
</feature>
<feature type="binding site" evidence="1">
    <location>
        <begin position="134"/>
        <end position="138"/>
    </location>
    <ligand>
        <name>substrate</name>
    </ligand>
</feature>
<feature type="binding site" evidence="1">
    <location>
        <position position="167"/>
    </location>
    <ligand>
        <name>substrate</name>
    </ligand>
</feature>
<feature type="binding site" evidence="1">
    <location>
        <position position="180"/>
    </location>
    <ligand>
        <name>substrate</name>
    </ligand>
</feature>
<feature type="binding site" evidence="1">
    <location>
        <position position="272"/>
    </location>
    <ligand>
        <name>substrate</name>
    </ligand>
</feature>
<feature type="binding site" evidence="1">
    <location>
        <position position="300"/>
    </location>
    <ligand>
        <name>Fe cation</name>
        <dbReference type="ChEBI" id="CHEBI:24875"/>
    </ligand>
</feature>
<proteinExistence type="inferred from homology"/>
<evidence type="ECO:0000255" key="1">
    <source>
        <dbReference type="HAMAP-Rule" id="MF_01445"/>
    </source>
</evidence>